<protein>
    <recommendedName>
        <fullName>Putative transcriptional regulator of 2-aminoethylphosphonate degradation operons</fullName>
    </recommendedName>
</protein>
<accession>Q5PFQ9</accession>
<name>PHNR_SALPA</name>
<keyword id="KW-0238">DNA-binding</keyword>
<keyword id="KW-0804">Transcription</keyword>
<keyword id="KW-0805">Transcription regulation</keyword>
<evidence type="ECO:0000255" key="1">
    <source>
        <dbReference type="PROSITE-ProRule" id="PRU00307"/>
    </source>
</evidence>
<sequence>MKSIPGDIPQYLLIKAQLQARIQSGALKSGDKLPSERELCAIFNTTRITIRESLAQLESSGLIWRADRRGWFVTPERLWLDPTQNTNFHKLCREQGREPKTALLSGVLTTVPVEVMEPLQLQPFDQIYLLTRLRYADGRAVCYCENHCLPARVPELLQYDLNGSLTEVYESYYNLVYTSMHLSFYPTAMPAQAAQALGVMEGRPALLLRRLNYDQHGRVLDLDIEYWRHDSLRIEVDTH</sequence>
<dbReference type="EMBL" id="CP000026">
    <property type="protein sequence ID" value="AAV78178.1"/>
    <property type="molecule type" value="Genomic_DNA"/>
</dbReference>
<dbReference type="RefSeq" id="WP_000836272.1">
    <property type="nucleotide sequence ID" value="NC_006511.1"/>
</dbReference>
<dbReference type="SMR" id="Q5PFQ9"/>
<dbReference type="KEGG" id="spt:SPA2293"/>
<dbReference type="HOGENOM" id="CLU_063236_2_2_6"/>
<dbReference type="Proteomes" id="UP000008185">
    <property type="component" value="Chromosome"/>
</dbReference>
<dbReference type="GO" id="GO:0003677">
    <property type="term" value="F:DNA binding"/>
    <property type="evidence" value="ECO:0007669"/>
    <property type="project" value="UniProtKB-KW"/>
</dbReference>
<dbReference type="GO" id="GO:0003700">
    <property type="term" value="F:DNA-binding transcription factor activity"/>
    <property type="evidence" value="ECO:0007669"/>
    <property type="project" value="InterPro"/>
</dbReference>
<dbReference type="GO" id="GO:0045892">
    <property type="term" value="P:negative regulation of DNA-templated transcription"/>
    <property type="evidence" value="ECO:0007669"/>
    <property type="project" value="TreeGrafter"/>
</dbReference>
<dbReference type="CDD" id="cd07377">
    <property type="entry name" value="WHTH_GntR"/>
    <property type="match status" value="1"/>
</dbReference>
<dbReference type="FunFam" id="1.10.10.10:FF:000287">
    <property type="entry name" value="Phosphonate utilization transcriptional regulator PhnR"/>
    <property type="match status" value="1"/>
</dbReference>
<dbReference type="FunFam" id="3.40.1410.10:FF:000010">
    <property type="entry name" value="Phosphonate utilization transcriptional regulator PhnR"/>
    <property type="match status" value="1"/>
</dbReference>
<dbReference type="Gene3D" id="3.40.1410.10">
    <property type="entry name" value="Chorismate lyase-like"/>
    <property type="match status" value="1"/>
</dbReference>
<dbReference type="Gene3D" id="1.10.10.10">
    <property type="entry name" value="Winged helix-like DNA-binding domain superfamily/Winged helix DNA-binding domain"/>
    <property type="match status" value="1"/>
</dbReference>
<dbReference type="InterPro" id="IPR050679">
    <property type="entry name" value="Bact_HTH_transcr_reg"/>
</dbReference>
<dbReference type="InterPro" id="IPR028978">
    <property type="entry name" value="Chorismate_lyase_/UTRA_dom_sf"/>
</dbReference>
<dbReference type="InterPro" id="IPR000524">
    <property type="entry name" value="Tscrpt_reg_HTH_GntR"/>
</dbReference>
<dbReference type="InterPro" id="IPR017722">
    <property type="entry name" value="Tscrpt_reg_PhnR"/>
</dbReference>
<dbReference type="InterPro" id="IPR011663">
    <property type="entry name" value="UTRA"/>
</dbReference>
<dbReference type="InterPro" id="IPR036388">
    <property type="entry name" value="WH-like_DNA-bd_sf"/>
</dbReference>
<dbReference type="InterPro" id="IPR036390">
    <property type="entry name" value="WH_DNA-bd_sf"/>
</dbReference>
<dbReference type="NCBIfam" id="TIGR03337">
    <property type="entry name" value="phnR"/>
    <property type="match status" value="1"/>
</dbReference>
<dbReference type="PANTHER" id="PTHR44846">
    <property type="entry name" value="MANNOSYL-D-GLYCERATE TRANSPORT/METABOLISM SYSTEM REPRESSOR MNGR-RELATED"/>
    <property type="match status" value="1"/>
</dbReference>
<dbReference type="PANTHER" id="PTHR44846:SF7">
    <property type="entry name" value="TRANSCRIPTIONAL REGULATOR OF 2-AMINOETHYLPHOSPHONATE DEGRADATION OPERONS-RELATED"/>
    <property type="match status" value="1"/>
</dbReference>
<dbReference type="Pfam" id="PF00392">
    <property type="entry name" value="GntR"/>
    <property type="match status" value="1"/>
</dbReference>
<dbReference type="Pfam" id="PF07702">
    <property type="entry name" value="UTRA"/>
    <property type="match status" value="1"/>
</dbReference>
<dbReference type="PRINTS" id="PR00035">
    <property type="entry name" value="HTHGNTR"/>
</dbReference>
<dbReference type="SMART" id="SM00345">
    <property type="entry name" value="HTH_GNTR"/>
    <property type="match status" value="1"/>
</dbReference>
<dbReference type="SMART" id="SM00866">
    <property type="entry name" value="UTRA"/>
    <property type="match status" value="1"/>
</dbReference>
<dbReference type="SUPFAM" id="SSF64288">
    <property type="entry name" value="Chorismate lyase-like"/>
    <property type="match status" value="1"/>
</dbReference>
<dbReference type="SUPFAM" id="SSF46785">
    <property type="entry name" value="Winged helix' DNA-binding domain"/>
    <property type="match status" value="1"/>
</dbReference>
<dbReference type="PROSITE" id="PS50949">
    <property type="entry name" value="HTH_GNTR"/>
    <property type="match status" value="1"/>
</dbReference>
<reference key="1">
    <citation type="journal article" date="2004" name="Nat. Genet.">
        <title>Comparison of genome degradation in Paratyphi A and Typhi, human-restricted serovars of Salmonella enterica that cause typhoid.</title>
        <authorList>
            <person name="McClelland M."/>
            <person name="Sanderson K.E."/>
            <person name="Clifton S.W."/>
            <person name="Latreille P."/>
            <person name="Porwollik S."/>
            <person name="Sabo A."/>
            <person name="Meyer R."/>
            <person name="Bieri T."/>
            <person name="Ozersky P."/>
            <person name="McLellan M."/>
            <person name="Harkins C.R."/>
            <person name="Wang C."/>
            <person name="Nguyen C."/>
            <person name="Berghoff A."/>
            <person name="Elliott G."/>
            <person name="Kohlberg S."/>
            <person name="Strong C."/>
            <person name="Du F."/>
            <person name="Carter J."/>
            <person name="Kremizki C."/>
            <person name="Layman D."/>
            <person name="Leonard S."/>
            <person name="Sun H."/>
            <person name="Fulton L."/>
            <person name="Nash W."/>
            <person name="Miner T."/>
            <person name="Minx P."/>
            <person name="Delehaunty K."/>
            <person name="Fronick C."/>
            <person name="Magrini V."/>
            <person name="Nhan M."/>
            <person name="Warren W."/>
            <person name="Florea L."/>
            <person name="Spieth J."/>
            <person name="Wilson R.K."/>
        </authorList>
    </citation>
    <scope>NUCLEOTIDE SEQUENCE [LARGE SCALE GENOMIC DNA]</scope>
    <source>
        <strain>ATCC 9150 / SARB42</strain>
    </source>
</reference>
<feature type="chain" id="PRO_0000286732" description="Putative transcriptional regulator of 2-aminoethylphosphonate degradation operons">
    <location>
        <begin position="1"/>
        <end position="239"/>
    </location>
</feature>
<feature type="domain" description="HTH gntR-type" evidence="1">
    <location>
        <begin position="8"/>
        <end position="76"/>
    </location>
</feature>
<feature type="DNA-binding region" description="H-T-H motif" evidence="1">
    <location>
        <begin position="36"/>
        <end position="55"/>
    </location>
</feature>
<proteinExistence type="predicted"/>
<organism>
    <name type="scientific">Salmonella paratyphi A (strain ATCC 9150 / SARB42)</name>
    <dbReference type="NCBI Taxonomy" id="295319"/>
    <lineage>
        <taxon>Bacteria</taxon>
        <taxon>Pseudomonadati</taxon>
        <taxon>Pseudomonadota</taxon>
        <taxon>Gammaproteobacteria</taxon>
        <taxon>Enterobacterales</taxon>
        <taxon>Enterobacteriaceae</taxon>
        <taxon>Salmonella</taxon>
    </lineage>
</organism>
<gene>
    <name type="primary">phnR</name>
    <name type="ordered locus">SPA2293</name>
</gene>